<feature type="chain" id="PRO_0000324757" description="Large ribosomal subunit protein eL32">
    <location>
        <begin position="1"/>
        <end position="133"/>
    </location>
</feature>
<accession>Q55AB5</accession>
<accession>Q86JP7</accession>
<organism>
    <name type="scientific">Dictyostelium discoideum</name>
    <name type="common">Social amoeba</name>
    <dbReference type="NCBI Taxonomy" id="44689"/>
    <lineage>
        <taxon>Eukaryota</taxon>
        <taxon>Amoebozoa</taxon>
        <taxon>Evosea</taxon>
        <taxon>Eumycetozoa</taxon>
        <taxon>Dictyostelia</taxon>
        <taxon>Dictyosteliales</taxon>
        <taxon>Dictyosteliaceae</taxon>
        <taxon>Dictyostelium</taxon>
    </lineage>
</organism>
<dbReference type="EMBL" id="AAFI02000007">
    <property type="protein sequence ID" value="EAL71422.1"/>
    <property type="molecule type" value="Genomic_DNA"/>
</dbReference>
<dbReference type="RefSeq" id="XP_645351.1">
    <property type="nucleotide sequence ID" value="XM_640259.1"/>
</dbReference>
<dbReference type="SMR" id="Q55AB5"/>
<dbReference type="FunCoup" id="Q55AB5">
    <property type="interactions" value="650"/>
</dbReference>
<dbReference type="STRING" id="44689.Q55AB5"/>
<dbReference type="PaxDb" id="44689-DDB0231150"/>
<dbReference type="EnsemblProtists" id="EAL71422">
    <property type="protein sequence ID" value="EAL71422"/>
    <property type="gene ID" value="DDB_G0271976"/>
</dbReference>
<dbReference type="GeneID" id="8618239"/>
<dbReference type="KEGG" id="ddi:DDB_G0271976"/>
<dbReference type="dictyBase" id="DDB_G0271976">
    <property type="gene designation" value="rpl32"/>
</dbReference>
<dbReference type="VEuPathDB" id="AmoebaDB:DDB_G0271976"/>
<dbReference type="eggNOG" id="KOG0878">
    <property type="taxonomic scope" value="Eukaryota"/>
</dbReference>
<dbReference type="HOGENOM" id="CLU_071479_4_1_1"/>
<dbReference type="InParanoid" id="Q55AB5"/>
<dbReference type="OMA" id="HPSGYEE"/>
<dbReference type="PhylomeDB" id="Q55AB5"/>
<dbReference type="Reactome" id="R-DDI-156827">
    <property type="pathway name" value="L13a-mediated translational silencing of Ceruloplasmin expression"/>
</dbReference>
<dbReference type="Reactome" id="R-DDI-1799339">
    <property type="pathway name" value="SRP-dependent cotranslational protein targeting to membrane"/>
</dbReference>
<dbReference type="Reactome" id="R-DDI-72689">
    <property type="pathway name" value="Formation of a pool of free 40S subunits"/>
</dbReference>
<dbReference type="Reactome" id="R-DDI-72706">
    <property type="pathway name" value="GTP hydrolysis and joining of the 60S ribosomal subunit"/>
</dbReference>
<dbReference type="Reactome" id="R-DDI-975956">
    <property type="pathway name" value="Nonsense Mediated Decay (NMD) independent of the Exon Junction Complex (EJC)"/>
</dbReference>
<dbReference type="Reactome" id="R-DDI-975957">
    <property type="pathway name" value="Nonsense Mediated Decay (NMD) enhanced by the Exon Junction Complex (EJC)"/>
</dbReference>
<dbReference type="PRO" id="PR:Q55AB5"/>
<dbReference type="Proteomes" id="UP000002195">
    <property type="component" value="Chromosome 2"/>
</dbReference>
<dbReference type="GO" id="GO:0022625">
    <property type="term" value="C:cytosolic large ribosomal subunit"/>
    <property type="evidence" value="ECO:0000318"/>
    <property type="project" value="GO_Central"/>
</dbReference>
<dbReference type="GO" id="GO:0003735">
    <property type="term" value="F:structural constituent of ribosome"/>
    <property type="evidence" value="ECO:0007669"/>
    <property type="project" value="InterPro"/>
</dbReference>
<dbReference type="GO" id="GO:0006412">
    <property type="term" value="P:translation"/>
    <property type="evidence" value="ECO:0007669"/>
    <property type="project" value="InterPro"/>
</dbReference>
<dbReference type="CDD" id="cd00513">
    <property type="entry name" value="Ribosomal_L32_L32e"/>
    <property type="match status" value="1"/>
</dbReference>
<dbReference type="InterPro" id="IPR001515">
    <property type="entry name" value="Ribosomal_eL32"/>
</dbReference>
<dbReference type="InterPro" id="IPR018263">
    <property type="entry name" value="Ribosomal_eL32_CS"/>
</dbReference>
<dbReference type="InterPro" id="IPR036351">
    <property type="entry name" value="Ribosomal_eL32_sf"/>
</dbReference>
<dbReference type="PANTHER" id="PTHR23413">
    <property type="entry name" value="60S RIBOSOMAL PROTEIN L32 AND DNA-DIRECTED RNA POLYMERASE II, SUBUNIT N"/>
    <property type="match status" value="1"/>
</dbReference>
<dbReference type="PANTHER" id="PTHR23413:SF1">
    <property type="entry name" value="RIBOSOMAL PROTEIN L32"/>
    <property type="match status" value="1"/>
</dbReference>
<dbReference type="Pfam" id="PF01655">
    <property type="entry name" value="Ribosomal_L32e"/>
    <property type="match status" value="1"/>
</dbReference>
<dbReference type="SMART" id="SM01393">
    <property type="entry name" value="Ribosomal_L32e"/>
    <property type="match status" value="1"/>
</dbReference>
<dbReference type="SUPFAM" id="SSF52042">
    <property type="entry name" value="Ribosomal protein L32e"/>
    <property type="match status" value="1"/>
</dbReference>
<dbReference type="PROSITE" id="PS00580">
    <property type="entry name" value="RIBOSOMAL_L32E"/>
    <property type="match status" value="1"/>
</dbReference>
<protein>
    <recommendedName>
        <fullName evidence="1">Large ribosomal subunit protein eL32</fullName>
    </recommendedName>
    <alternativeName>
        <fullName>60S ribosomal protein L32</fullName>
    </alternativeName>
</protein>
<name>RL32_DICDI</name>
<gene>
    <name type="primary">rpl32</name>
    <name type="ORF">DDB_G0271976</name>
</gene>
<evidence type="ECO:0000305" key="1"/>
<sequence>MPSPINRTKIVKKKTTKFNRFQSDLFKRVGASWRKPRGIDNRVRRRFSGSRAMPSIGFGSAKATKDVCPDGFKRFVIRNVQELEVLLMQNRRYAAVIFHGVSAKSRKAIVERAAELNIKVTTPNARLRSEERE</sequence>
<keyword id="KW-1185">Reference proteome</keyword>
<keyword id="KW-0687">Ribonucleoprotein</keyword>
<keyword id="KW-0689">Ribosomal protein</keyword>
<proteinExistence type="inferred from homology"/>
<comment type="similarity">
    <text evidence="1">Belongs to the eukaryotic ribosomal protein eL32 family.</text>
</comment>
<reference key="1">
    <citation type="journal article" date="2002" name="Nature">
        <title>Sequence and analysis of chromosome 2 of Dictyostelium discoideum.</title>
        <authorList>
            <person name="Gloeckner G."/>
            <person name="Eichinger L."/>
            <person name="Szafranski K."/>
            <person name="Pachebat J.A."/>
            <person name="Bankier A.T."/>
            <person name="Dear P.H."/>
            <person name="Lehmann R."/>
            <person name="Baumgart C."/>
            <person name="Parra G."/>
            <person name="Abril J.F."/>
            <person name="Guigo R."/>
            <person name="Kumpf K."/>
            <person name="Tunggal B."/>
            <person name="Cox E.C."/>
            <person name="Quail M.A."/>
            <person name="Platzer M."/>
            <person name="Rosenthal A."/>
            <person name="Noegel A.A."/>
        </authorList>
    </citation>
    <scope>NUCLEOTIDE SEQUENCE [LARGE SCALE GENOMIC DNA]</scope>
    <source>
        <strain>AX4</strain>
    </source>
</reference>
<reference key="2">
    <citation type="journal article" date="2005" name="Nature">
        <title>The genome of the social amoeba Dictyostelium discoideum.</title>
        <authorList>
            <person name="Eichinger L."/>
            <person name="Pachebat J.A."/>
            <person name="Gloeckner G."/>
            <person name="Rajandream M.A."/>
            <person name="Sucgang R."/>
            <person name="Berriman M."/>
            <person name="Song J."/>
            <person name="Olsen R."/>
            <person name="Szafranski K."/>
            <person name="Xu Q."/>
            <person name="Tunggal B."/>
            <person name="Kummerfeld S."/>
            <person name="Madera M."/>
            <person name="Konfortov B.A."/>
            <person name="Rivero F."/>
            <person name="Bankier A.T."/>
            <person name="Lehmann R."/>
            <person name="Hamlin N."/>
            <person name="Davies R."/>
            <person name="Gaudet P."/>
            <person name="Fey P."/>
            <person name="Pilcher K."/>
            <person name="Chen G."/>
            <person name="Saunders D."/>
            <person name="Sodergren E.J."/>
            <person name="Davis P."/>
            <person name="Kerhornou A."/>
            <person name="Nie X."/>
            <person name="Hall N."/>
            <person name="Anjard C."/>
            <person name="Hemphill L."/>
            <person name="Bason N."/>
            <person name="Farbrother P."/>
            <person name="Desany B."/>
            <person name="Just E."/>
            <person name="Morio T."/>
            <person name="Rost R."/>
            <person name="Churcher C.M."/>
            <person name="Cooper J."/>
            <person name="Haydock S."/>
            <person name="van Driessche N."/>
            <person name="Cronin A."/>
            <person name="Goodhead I."/>
            <person name="Muzny D.M."/>
            <person name="Mourier T."/>
            <person name="Pain A."/>
            <person name="Lu M."/>
            <person name="Harper D."/>
            <person name="Lindsay R."/>
            <person name="Hauser H."/>
            <person name="James K.D."/>
            <person name="Quiles M."/>
            <person name="Madan Babu M."/>
            <person name="Saito T."/>
            <person name="Buchrieser C."/>
            <person name="Wardroper A."/>
            <person name="Felder M."/>
            <person name="Thangavelu M."/>
            <person name="Johnson D."/>
            <person name="Knights A."/>
            <person name="Loulseged H."/>
            <person name="Mungall K.L."/>
            <person name="Oliver K."/>
            <person name="Price C."/>
            <person name="Quail M.A."/>
            <person name="Urushihara H."/>
            <person name="Hernandez J."/>
            <person name="Rabbinowitsch E."/>
            <person name="Steffen D."/>
            <person name="Sanders M."/>
            <person name="Ma J."/>
            <person name="Kohara Y."/>
            <person name="Sharp S."/>
            <person name="Simmonds M.N."/>
            <person name="Spiegler S."/>
            <person name="Tivey A."/>
            <person name="Sugano S."/>
            <person name="White B."/>
            <person name="Walker D."/>
            <person name="Woodward J.R."/>
            <person name="Winckler T."/>
            <person name="Tanaka Y."/>
            <person name="Shaulsky G."/>
            <person name="Schleicher M."/>
            <person name="Weinstock G.M."/>
            <person name="Rosenthal A."/>
            <person name="Cox E.C."/>
            <person name="Chisholm R.L."/>
            <person name="Gibbs R.A."/>
            <person name="Loomis W.F."/>
            <person name="Platzer M."/>
            <person name="Kay R.R."/>
            <person name="Williams J.G."/>
            <person name="Dear P.H."/>
            <person name="Noegel A.A."/>
            <person name="Barrell B.G."/>
            <person name="Kuspa A."/>
        </authorList>
    </citation>
    <scope>NUCLEOTIDE SEQUENCE [LARGE SCALE GENOMIC DNA]</scope>
    <source>
        <strain>AX4</strain>
    </source>
</reference>